<sequence>MFGRTLALAAVFATTVLSAAASLEECPGYKVSNVRDNGHTLKADLRLAGKACNVYGEDIRQLKLRVEYQTHERLHVIIEDSKEDVYQVPESVFPRPESEENDSASTKSALKFSMTQKPFSFKVTRRATDEVIFDTSNSPLIFESQYLRLRTSLPDEPNLYGLGEHSDPLRLQTEDLVTTLWNRDAFGIPPGTNLYGSHPVYYDHRGRSGTHGVFLLNSNGMDVKVGSEDGDNGKKYLEYNILGGVLDFYFMAGPTPKEVASQYAEVVGLPAMMPYWGFGLHQCRYGYRDAFNVAEVVYNYSQAGIPLETMWTDIDYMDGRKVFTLDSKRFPIDEMRALVEYLHDRNQHYIVMVDPAVSYGDNDAFERGKTQDVFMKSKDGAIYKGAVWPGVTAFPDWFHPGTQDYWNNEFKLFFDPEKGIDIDALWIDMNEASNFCDWPCSDPEGWERDHDLPPAPPPVRPIPRPLPGFPDKLQPGSVRLVKRDGTRLRSKAGLPGRDLIDPPYRIQNEAGSISNKTLNTDLVHANGLVEYDTHNLYGTMLTKYRLGDNLSEWSQYRFSISQILQFAAIYQVPMVGADVCGFGGNVTEELCARWAMLGAFYPFYRNHNDIAGRDQEFYRWESVTEAARTAIGIRYKLLDYIYTAFHRQTQSGDPVLNPLFYIYPEDEDTFAIDLQFFYGDALLVSPVTEEGATSVEIYLPDDIFYDYYTGEPIEGKGDLITMENVPITHIPLHFRGGQIVPMRADSANTTTELRKQPFELVICLDREGNAEGSLYLDDGDSLEQPHTSEINFEYHNGVLKVSGKFDFQNEEALEIKNIFVLGYKQDMNVQDKGNMNKDSQYDARLKKLAIKAKILLTGPSEMTLH</sequence>
<accession>D4B0X3</accession>
<dbReference type="EC" id="3.2.1.20" evidence="1"/>
<dbReference type="EC" id="3.2.1.21" evidence="1"/>
<dbReference type="EMBL" id="ABSU01000025">
    <property type="protein sequence ID" value="EFE30908.1"/>
    <property type="molecule type" value="Genomic_DNA"/>
</dbReference>
<dbReference type="RefSeq" id="XP_003011548.1">
    <property type="nucleotide sequence ID" value="XM_003011502.1"/>
</dbReference>
<dbReference type="SMR" id="D4B0X3"/>
<dbReference type="STRING" id="663331.D4B0X3"/>
<dbReference type="GeneID" id="9523318"/>
<dbReference type="KEGG" id="abe:ARB_02101"/>
<dbReference type="eggNOG" id="KOG1065">
    <property type="taxonomic scope" value="Eukaryota"/>
</dbReference>
<dbReference type="HOGENOM" id="CLU_000631_11_0_1"/>
<dbReference type="OMA" id="YKGAVWP"/>
<dbReference type="Proteomes" id="UP000008866">
    <property type="component" value="Unassembled WGS sequence"/>
</dbReference>
<dbReference type="GO" id="GO:0005576">
    <property type="term" value="C:extracellular region"/>
    <property type="evidence" value="ECO:0007669"/>
    <property type="project" value="UniProtKB-SubCell"/>
</dbReference>
<dbReference type="GO" id="GO:0004558">
    <property type="term" value="F:alpha-1,4-glucosidase activity"/>
    <property type="evidence" value="ECO:0007669"/>
    <property type="project" value="UniProtKB-EC"/>
</dbReference>
<dbReference type="GO" id="GO:0008422">
    <property type="term" value="F:beta-glucosidase activity"/>
    <property type="evidence" value="ECO:0007669"/>
    <property type="project" value="UniProtKB-EC"/>
</dbReference>
<dbReference type="GO" id="GO:0030246">
    <property type="term" value="F:carbohydrate binding"/>
    <property type="evidence" value="ECO:0007669"/>
    <property type="project" value="InterPro"/>
</dbReference>
<dbReference type="GO" id="GO:0071555">
    <property type="term" value="P:cell wall organization"/>
    <property type="evidence" value="ECO:0007669"/>
    <property type="project" value="UniProtKB-KW"/>
</dbReference>
<dbReference type="GO" id="GO:0000272">
    <property type="term" value="P:polysaccharide catabolic process"/>
    <property type="evidence" value="ECO:0007669"/>
    <property type="project" value="UniProtKB-KW"/>
</dbReference>
<dbReference type="CDD" id="cd06602">
    <property type="entry name" value="GH31_MGAM_SI_GAA"/>
    <property type="match status" value="1"/>
</dbReference>
<dbReference type="CDD" id="cd14752">
    <property type="entry name" value="GH31_N"/>
    <property type="match status" value="1"/>
</dbReference>
<dbReference type="Gene3D" id="3.20.20.80">
    <property type="entry name" value="Glycosidases"/>
    <property type="match status" value="2"/>
</dbReference>
<dbReference type="Gene3D" id="2.60.40.1760">
    <property type="entry name" value="glycosyl hydrolase (family 31)"/>
    <property type="match status" value="1"/>
</dbReference>
<dbReference type="Gene3D" id="2.60.40.1180">
    <property type="entry name" value="Golgi alpha-mannosidase II"/>
    <property type="match status" value="2"/>
</dbReference>
<dbReference type="InterPro" id="IPR011013">
    <property type="entry name" value="Gal_mutarotase_sf_dom"/>
</dbReference>
<dbReference type="InterPro" id="IPR048395">
    <property type="entry name" value="Glyco_hydro_31_C"/>
</dbReference>
<dbReference type="InterPro" id="IPR025887">
    <property type="entry name" value="Glyco_hydro_31_N_dom"/>
</dbReference>
<dbReference type="InterPro" id="IPR000322">
    <property type="entry name" value="Glyco_hydro_31_TIM"/>
</dbReference>
<dbReference type="InterPro" id="IPR013780">
    <property type="entry name" value="Glyco_hydro_b"/>
</dbReference>
<dbReference type="InterPro" id="IPR017853">
    <property type="entry name" value="Glycoside_hydrolase_SF"/>
</dbReference>
<dbReference type="PANTHER" id="PTHR22762">
    <property type="entry name" value="ALPHA-GLUCOSIDASE"/>
    <property type="match status" value="1"/>
</dbReference>
<dbReference type="PANTHER" id="PTHR22762:SF67">
    <property type="entry name" value="ALPHA_BETA-GLUCOSIDASE AGDC-RELATED"/>
    <property type="match status" value="1"/>
</dbReference>
<dbReference type="Pfam" id="PF13802">
    <property type="entry name" value="Gal_mutarotas_2"/>
    <property type="match status" value="1"/>
</dbReference>
<dbReference type="Pfam" id="PF01055">
    <property type="entry name" value="Glyco_hydro_31_2nd"/>
    <property type="match status" value="2"/>
</dbReference>
<dbReference type="Pfam" id="PF21365">
    <property type="entry name" value="Glyco_hydro_31_3rd"/>
    <property type="match status" value="1"/>
</dbReference>
<dbReference type="SUPFAM" id="SSF51445">
    <property type="entry name" value="(Trans)glycosidases"/>
    <property type="match status" value="1"/>
</dbReference>
<dbReference type="SUPFAM" id="SSF74650">
    <property type="entry name" value="Galactose mutarotase-like"/>
    <property type="match status" value="1"/>
</dbReference>
<dbReference type="SUPFAM" id="SSF51011">
    <property type="entry name" value="Glycosyl hydrolase domain"/>
    <property type="match status" value="1"/>
</dbReference>
<organism>
    <name type="scientific">Arthroderma benhamiae (strain ATCC MYA-4681 / CBS 112371)</name>
    <name type="common">Trichophyton mentagrophytes</name>
    <dbReference type="NCBI Taxonomy" id="663331"/>
    <lineage>
        <taxon>Eukaryota</taxon>
        <taxon>Fungi</taxon>
        <taxon>Dikarya</taxon>
        <taxon>Ascomycota</taxon>
        <taxon>Pezizomycotina</taxon>
        <taxon>Eurotiomycetes</taxon>
        <taxon>Eurotiomycetidae</taxon>
        <taxon>Onygenales</taxon>
        <taxon>Arthrodermataceae</taxon>
        <taxon>Trichophyton</taxon>
    </lineage>
</organism>
<reference key="1">
    <citation type="journal article" date="2011" name="Genome Biol.">
        <title>Comparative and functional genomics provide insights into the pathogenicity of dermatophytic fungi.</title>
        <authorList>
            <person name="Burmester A."/>
            <person name="Shelest E."/>
            <person name="Gloeckner G."/>
            <person name="Heddergott C."/>
            <person name="Schindler S."/>
            <person name="Staib P."/>
            <person name="Heidel A."/>
            <person name="Felder M."/>
            <person name="Petzold A."/>
            <person name="Szafranski K."/>
            <person name="Feuermann M."/>
            <person name="Pedruzzi I."/>
            <person name="Priebe S."/>
            <person name="Groth M."/>
            <person name="Winkler R."/>
            <person name="Li W."/>
            <person name="Kniemeyer O."/>
            <person name="Schroeckh V."/>
            <person name="Hertweck C."/>
            <person name="Hube B."/>
            <person name="White T.C."/>
            <person name="Platzer M."/>
            <person name="Guthke R."/>
            <person name="Heitman J."/>
            <person name="Woestemeyer J."/>
            <person name="Zipfel P.F."/>
            <person name="Monod M."/>
            <person name="Brakhage A.A."/>
        </authorList>
    </citation>
    <scope>NUCLEOTIDE SEQUENCE [LARGE SCALE GENOMIC DNA]</scope>
    <scope>IDENTIFICATION BY MASS SPECTROMETRY</scope>
    <scope>SUBCELLULAR LOCATION</scope>
    <source>
        <strain>ATCC MYA-4681 / CBS 112371</strain>
    </source>
</reference>
<reference key="2">
    <citation type="journal article" date="2011" name="Proteomics">
        <title>Identification of novel secreted proteases during extracellular proteolysis by dermatophytes at acidic pH.</title>
        <authorList>
            <person name="Sriranganadane D."/>
            <person name="Waridel P."/>
            <person name="Salamin K."/>
            <person name="Feuermann M."/>
            <person name="Mignon B."/>
            <person name="Staib P."/>
            <person name="Neuhaus J.M."/>
            <person name="Quadroni M."/>
            <person name="Monod M."/>
        </authorList>
    </citation>
    <scope>IDENTIFICATION BY MASS SPECTROMETRY</scope>
    <scope>SUBCELLULAR LOCATION</scope>
</reference>
<feature type="signal peptide" evidence="3">
    <location>
        <begin position="1"/>
        <end position="21"/>
    </location>
</feature>
<feature type="chain" id="PRO_5003053822" description="Probable alpha/beta-glucosidase ARB_02101">
    <location>
        <begin position="22"/>
        <end position="865"/>
    </location>
</feature>
<feature type="active site" description="Nucleophile" evidence="2">
    <location>
        <position position="428"/>
    </location>
</feature>
<feature type="active site" evidence="2">
    <location>
        <position position="431"/>
    </location>
</feature>
<feature type="active site" description="Proton donor" evidence="2">
    <location>
        <position position="548"/>
    </location>
</feature>
<feature type="glycosylation site" description="N-linked (GlcNAc...) asparagine" evidence="4">
    <location>
        <position position="101"/>
    </location>
</feature>
<feature type="glycosylation site" description="N-linked (GlcNAc...) asparagine" evidence="4">
    <location>
        <position position="299"/>
    </location>
</feature>
<feature type="glycosylation site" description="N-linked (GlcNAc...) asparagine" evidence="4">
    <location>
        <position position="515"/>
    </location>
</feature>
<feature type="glycosylation site" description="N-linked (GlcNAc...) asparagine" evidence="4">
    <location>
        <position position="549"/>
    </location>
</feature>
<feature type="glycosylation site" description="N-linked (GlcNAc...) asparagine" evidence="4">
    <location>
        <position position="585"/>
    </location>
</feature>
<feature type="glycosylation site" description="N-linked (GlcNAc...) asparagine" evidence="4">
    <location>
        <position position="748"/>
    </location>
</feature>
<evidence type="ECO:0000250" key="1">
    <source>
        <dbReference type="UniProtKB" id="Q5AWI5"/>
    </source>
</evidence>
<evidence type="ECO:0000250" key="2">
    <source>
        <dbReference type="UniProtKB" id="Q9C0Y4"/>
    </source>
</evidence>
<evidence type="ECO:0000255" key="3"/>
<evidence type="ECO:0000255" key="4">
    <source>
        <dbReference type="PROSITE-ProRule" id="PRU00498"/>
    </source>
</evidence>
<evidence type="ECO:0000269" key="5">
    <source>
    </source>
</evidence>
<evidence type="ECO:0000269" key="6">
    <source>
    </source>
</evidence>
<evidence type="ECO:0000305" key="7"/>
<keyword id="KW-0119">Carbohydrate metabolism</keyword>
<keyword id="KW-0961">Cell wall biogenesis/degradation</keyword>
<keyword id="KW-0325">Glycoprotein</keyword>
<keyword id="KW-0326">Glycosidase</keyword>
<keyword id="KW-0378">Hydrolase</keyword>
<keyword id="KW-0624">Polysaccharide degradation</keyword>
<keyword id="KW-1185">Reference proteome</keyword>
<keyword id="KW-0964">Secreted</keyword>
<keyword id="KW-0732">Signal</keyword>
<gene>
    <name type="ORF">ARB_02101</name>
</gene>
<name>AGD1_ARTBC</name>
<protein>
    <recommendedName>
        <fullName evidence="7">Probable alpha/beta-glucosidase ARB_02101</fullName>
        <ecNumber evidence="1">3.2.1.20</ecNumber>
        <ecNumber evidence="1">3.2.1.21</ecNumber>
    </recommendedName>
</protein>
<comment type="function">
    <text evidence="1">Glucosidase involved in the degradation of cellulosic biomass. Has both alpha- and beta-glucosidase activity (By similarity).</text>
</comment>
<comment type="catalytic activity">
    <reaction evidence="1">
        <text>Hydrolysis of terminal, non-reducing (1-&gt;4)-linked alpha-D-glucose residues with release of alpha-D-glucose.</text>
        <dbReference type="EC" id="3.2.1.20"/>
    </reaction>
</comment>
<comment type="catalytic activity">
    <reaction evidence="1">
        <text>Hydrolysis of terminal, non-reducing beta-D-glucosyl residues with release of beta-D-glucose.</text>
        <dbReference type="EC" id="3.2.1.21"/>
    </reaction>
</comment>
<comment type="subcellular location">
    <subcellularLocation>
        <location evidence="5 6">Secreted</location>
    </subcellularLocation>
</comment>
<comment type="similarity">
    <text evidence="7">Belongs to the glycosyl hydrolase 31 family.</text>
</comment>
<proteinExistence type="evidence at protein level"/>